<feature type="chain" id="PRO_1000205035" description="A-type ATP synthase subunit A">
    <location>
        <begin position="1"/>
        <end position="592"/>
    </location>
</feature>
<feature type="binding site" evidence="1">
    <location>
        <begin position="233"/>
        <end position="240"/>
    </location>
    <ligand>
        <name>ATP</name>
        <dbReference type="ChEBI" id="CHEBI:30616"/>
    </ligand>
</feature>
<proteinExistence type="inferred from homology"/>
<sequence>MNNGRIVRINGPLVVADNMKNAQMYEVVEVGEPRLIGEITRIEGDRAFIQVYEDTSGIKPNEPVYRTGAPLSIELGPGLIGKIFDGLQRPLDSIKELTKSPFIARGIKVPSVDRKTKWHFIPKVKKGDKIEGGDIIGIVNETPLVEHRILVPPYVHGTLKEIVAEGDYTVEDPIAVVDMNGDEVPIKLMQRWPVRIPRPFKEKLEPTEPLLTGTRVLDTIFPIAKGGTAAIPGPFGSGKTVTLQSLAKWSAAKIVIYVGCGERGNEMTDELRQFPSLKDPWTGRPLLERTILVANTSNMPVAAREASIYVGITMAEYFRDQGYDTLLVADSTSRWAEALRDLGGRMEEMPAEEGFPSYLPSRLAEYYERAGRVKTVGKPERFGSVTVASAVSPPGGDFTEPVTSQTLRFVKVFWPLDVSLAQARHYPAINWLQGFSAYVDLVANWWNTNVDPKWREMRDMMVRTLIREDELRQIVRLVGPESLAEKDKLVLETARLIKEAFLKQNAYDDIDAFSSPQKQARVMRLIYLFNTHASRLVERGIPTKKIVDSMGQLLPEIIRSKAAIKNDELNKYDELERKLISVFENLEKEAGT</sequence>
<comment type="function">
    <text evidence="1">Component of the A-type ATP synthase that produces ATP from ADP in the presence of a proton gradient across the membrane. The A chain is the catalytic subunit.</text>
</comment>
<comment type="catalytic activity">
    <reaction evidence="1">
        <text>ATP + H2O + 4 H(+)(in) = ADP + phosphate + 5 H(+)(out)</text>
        <dbReference type="Rhea" id="RHEA:57720"/>
        <dbReference type="ChEBI" id="CHEBI:15377"/>
        <dbReference type="ChEBI" id="CHEBI:15378"/>
        <dbReference type="ChEBI" id="CHEBI:30616"/>
        <dbReference type="ChEBI" id="CHEBI:43474"/>
        <dbReference type="ChEBI" id="CHEBI:456216"/>
        <dbReference type="EC" id="7.1.2.2"/>
    </reaction>
</comment>
<comment type="subunit">
    <text evidence="1">Has multiple subunits with at least A(3), B(3), C, D, E, F, H, I and proteolipid K(x).</text>
</comment>
<comment type="subcellular location">
    <subcellularLocation>
        <location evidence="1">Cell membrane</location>
        <topology evidence="1">Peripheral membrane protein</topology>
    </subcellularLocation>
</comment>
<comment type="similarity">
    <text evidence="1">Belongs to the ATPase alpha/beta chains family.</text>
</comment>
<gene>
    <name evidence="1" type="primary">atpA</name>
    <name type="ordered locus">M1425_1566</name>
</gene>
<evidence type="ECO:0000255" key="1">
    <source>
        <dbReference type="HAMAP-Rule" id="MF_00309"/>
    </source>
</evidence>
<protein>
    <recommendedName>
        <fullName evidence="1">A-type ATP synthase subunit A</fullName>
        <ecNumber evidence="1">7.1.2.2</ecNumber>
    </recommendedName>
</protein>
<dbReference type="EC" id="7.1.2.2" evidence="1"/>
<dbReference type="EMBL" id="CP001400">
    <property type="protein sequence ID" value="ACP38315.1"/>
    <property type="molecule type" value="Genomic_DNA"/>
</dbReference>
<dbReference type="RefSeq" id="WP_012711559.1">
    <property type="nucleotide sequence ID" value="NC_012588.1"/>
</dbReference>
<dbReference type="SMR" id="C3MW93"/>
<dbReference type="KEGG" id="sia:M1425_1566"/>
<dbReference type="HOGENOM" id="CLU_008162_3_1_2"/>
<dbReference type="Proteomes" id="UP000001350">
    <property type="component" value="Chromosome"/>
</dbReference>
<dbReference type="GO" id="GO:0005886">
    <property type="term" value="C:plasma membrane"/>
    <property type="evidence" value="ECO:0007669"/>
    <property type="project" value="UniProtKB-SubCell"/>
</dbReference>
<dbReference type="GO" id="GO:0033178">
    <property type="term" value="C:proton-transporting two-sector ATPase complex, catalytic domain"/>
    <property type="evidence" value="ECO:0007669"/>
    <property type="project" value="InterPro"/>
</dbReference>
<dbReference type="GO" id="GO:0005524">
    <property type="term" value="F:ATP binding"/>
    <property type="evidence" value="ECO:0007669"/>
    <property type="project" value="UniProtKB-UniRule"/>
</dbReference>
<dbReference type="GO" id="GO:0016887">
    <property type="term" value="F:ATP hydrolysis activity"/>
    <property type="evidence" value="ECO:0007669"/>
    <property type="project" value="InterPro"/>
</dbReference>
<dbReference type="GO" id="GO:0046933">
    <property type="term" value="F:proton-transporting ATP synthase activity, rotational mechanism"/>
    <property type="evidence" value="ECO:0007669"/>
    <property type="project" value="UniProtKB-UniRule"/>
</dbReference>
<dbReference type="GO" id="GO:0046961">
    <property type="term" value="F:proton-transporting ATPase activity, rotational mechanism"/>
    <property type="evidence" value="ECO:0007669"/>
    <property type="project" value="InterPro"/>
</dbReference>
<dbReference type="GO" id="GO:0042777">
    <property type="term" value="P:proton motive force-driven plasma membrane ATP synthesis"/>
    <property type="evidence" value="ECO:0007669"/>
    <property type="project" value="UniProtKB-UniRule"/>
</dbReference>
<dbReference type="CDD" id="cd18111">
    <property type="entry name" value="ATP-synt_V_A-type_alpha_C"/>
    <property type="match status" value="1"/>
</dbReference>
<dbReference type="CDD" id="cd18119">
    <property type="entry name" value="ATP-synt_V_A-type_alpha_N"/>
    <property type="match status" value="1"/>
</dbReference>
<dbReference type="CDD" id="cd01134">
    <property type="entry name" value="V_A-ATPase_A"/>
    <property type="match status" value="1"/>
</dbReference>
<dbReference type="FunFam" id="1.10.1140.10:FF:000002">
    <property type="entry name" value="V-type proton ATPase catalytic subunit A"/>
    <property type="match status" value="1"/>
</dbReference>
<dbReference type="FunFam" id="2.40.30.20:FF:000002">
    <property type="entry name" value="V-type proton ATPase catalytic subunit A"/>
    <property type="match status" value="1"/>
</dbReference>
<dbReference type="FunFam" id="2.40.50.100:FF:000008">
    <property type="entry name" value="V-type proton ATPase catalytic subunit A"/>
    <property type="match status" value="1"/>
</dbReference>
<dbReference type="Gene3D" id="2.40.30.20">
    <property type="match status" value="1"/>
</dbReference>
<dbReference type="Gene3D" id="2.40.50.100">
    <property type="match status" value="1"/>
</dbReference>
<dbReference type="Gene3D" id="1.10.1140.10">
    <property type="entry name" value="Bovine Mitochondrial F1-atpase, Atp Synthase Beta Chain, Chain D, domain 3"/>
    <property type="match status" value="1"/>
</dbReference>
<dbReference type="Gene3D" id="3.40.50.300">
    <property type="entry name" value="P-loop containing nucleotide triphosphate hydrolases"/>
    <property type="match status" value="1"/>
</dbReference>
<dbReference type="HAMAP" id="MF_00309">
    <property type="entry name" value="ATP_synth_A_arch"/>
    <property type="match status" value="1"/>
</dbReference>
<dbReference type="InterPro" id="IPR003593">
    <property type="entry name" value="AAA+_ATPase"/>
</dbReference>
<dbReference type="InterPro" id="IPR055190">
    <property type="entry name" value="ATP-synt_VA_C"/>
</dbReference>
<dbReference type="InterPro" id="IPR031686">
    <property type="entry name" value="ATP-synth_a_Xtn"/>
</dbReference>
<dbReference type="InterPro" id="IPR023366">
    <property type="entry name" value="ATP_synth_asu-like_sf"/>
</dbReference>
<dbReference type="InterPro" id="IPR005726">
    <property type="entry name" value="ATP_synth_asu_arc"/>
</dbReference>
<dbReference type="InterPro" id="IPR004100">
    <property type="entry name" value="ATPase_F1/V1/A1_a/bsu_N"/>
</dbReference>
<dbReference type="InterPro" id="IPR036121">
    <property type="entry name" value="ATPase_F1/V1/A1_a/bsu_N_sf"/>
</dbReference>
<dbReference type="InterPro" id="IPR000194">
    <property type="entry name" value="ATPase_F1/V1/A1_a/bsu_nucl-bd"/>
</dbReference>
<dbReference type="InterPro" id="IPR024034">
    <property type="entry name" value="ATPase_F1/V1_b/a_C"/>
</dbReference>
<dbReference type="InterPro" id="IPR027417">
    <property type="entry name" value="P-loop_NTPase"/>
</dbReference>
<dbReference type="InterPro" id="IPR022878">
    <property type="entry name" value="V-ATPase_asu"/>
</dbReference>
<dbReference type="NCBIfam" id="TIGR01043">
    <property type="entry name" value="ATP_syn_A_arch"/>
    <property type="match status" value="1"/>
</dbReference>
<dbReference type="NCBIfam" id="NF003220">
    <property type="entry name" value="PRK04192.1"/>
    <property type="match status" value="1"/>
</dbReference>
<dbReference type="PANTHER" id="PTHR43607:SF1">
    <property type="entry name" value="H(+)-TRANSPORTING TWO-SECTOR ATPASE"/>
    <property type="match status" value="1"/>
</dbReference>
<dbReference type="PANTHER" id="PTHR43607">
    <property type="entry name" value="V-TYPE PROTON ATPASE CATALYTIC SUBUNIT A"/>
    <property type="match status" value="1"/>
</dbReference>
<dbReference type="Pfam" id="PF00006">
    <property type="entry name" value="ATP-synt_ab"/>
    <property type="match status" value="1"/>
</dbReference>
<dbReference type="Pfam" id="PF02874">
    <property type="entry name" value="ATP-synt_ab_N"/>
    <property type="match status" value="1"/>
</dbReference>
<dbReference type="Pfam" id="PF16886">
    <property type="entry name" value="ATP-synt_ab_Xtn"/>
    <property type="match status" value="1"/>
</dbReference>
<dbReference type="Pfam" id="PF22919">
    <property type="entry name" value="ATP-synt_VA_C"/>
    <property type="match status" value="1"/>
</dbReference>
<dbReference type="SMART" id="SM00382">
    <property type="entry name" value="AAA"/>
    <property type="match status" value="1"/>
</dbReference>
<dbReference type="SUPFAM" id="SSF47917">
    <property type="entry name" value="C-terminal domain of alpha and beta subunits of F1 ATP synthase"/>
    <property type="match status" value="1"/>
</dbReference>
<dbReference type="SUPFAM" id="SSF50615">
    <property type="entry name" value="N-terminal domain of alpha and beta subunits of F1 ATP synthase"/>
    <property type="match status" value="1"/>
</dbReference>
<dbReference type="SUPFAM" id="SSF52540">
    <property type="entry name" value="P-loop containing nucleoside triphosphate hydrolases"/>
    <property type="match status" value="1"/>
</dbReference>
<keyword id="KW-0066">ATP synthesis</keyword>
<keyword id="KW-0067">ATP-binding</keyword>
<keyword id="KW-1003">Cell membrane</keyword>
<keyword id="KW-0375">Hydrogen ion transport</keyword>
<keyword id="KW-0406">Ion transport</keyword>
<keyword id="KW-0472">Membrane</keyword>
<keyword id="KW-0547">Nucleotide-binding</keyword>
<keyword id="KW-1278">Translocase</keyword>
<keyword id="KW-0813">Transport</keyword>
<reference key="1">
    <citation type="journal article" date="2009" name="Proc. Natl. Acad. Sci. U.S.A.">
        <title>Biogeography of the Sulfolobus islandicus pan-genome.</title>
        <authorList>
            <person name="Reno M.L."/>
            <person name="Held N.L."/>
            <person name="Fields C.J."/>
            <person name="Burke P.V."/>
            <person name="Whitaker R.J."/>
        </authorList>
    </citation>
    <scope>NUCLEOTIDE SEQUENCE [LARGE SCALE GENOMIC DNA]</scope>
    <source>
        <strain>M.14.25 / Kamchatka #1</strain>
    </source>
</reference>
<accession>C3MW93</accession>
<name>AATA_SACI4</name>
<organism>
    <name type="scientific">Saccharolobus islandicus (strain M.14.25 / Kamchatka #1)</name>
    <name type="common">Sulfolobus islandicus</name>
    <dbReference type="NCBI Taxonomy" id="427317"/>
    <lineage>
        <taxon>Archaea</taxon>
        <taxon>Thermoproteota</taxon>
        <taxon>Thermoprotei</taxon>
        <taxon>Sulfolobales</taxon>
        <taxon>Sulfolobaceae</taxon>
        <taxon>Saccharolobus</taxon>
    </lineage>
</organism>